<proteinExistence type="inferred from homology"/>
<protein>
    <recommendedName>
        <fullName evidence="1">UPF0756 membrane protein BCA_4705</fullName>
    </recommendedName>
</protein>
<feature type="chain" id="PRO_0000388821" description="UPF0756 membrane protein BCA_4705">
    <location>
        <begin position="1"/>
        <end position="153"/>
    </location>
</feature>
<feature type="transmembrane region" description="Helical" evidence="1">
    <location>
        <begin position="8"/>
        <end position="28"/>
    </location>
</feature>
<feature type="transmembrane region" description="Helical" evidence="1">
    <location>
        <begin position="54"/>
        <end position="74"/>
    </location>
</feature>
<feature type="transmembrane region" description="Helical" evidence="1">
    <location>
        <begin position="87"/>
        <end position="107"/>
    </location>
</feature>
<feature type="transmembrane region" description="Helical" evidence="1">
    <location>
        <begin position="117"/>
        <end position="137"/>
    </location>
</feature>
<name>Y4705_BACC3</name>
<comment type="subcellular location">
    <subcellularLocation>
        <location evidence="1">Cell membrane</location>
        <topology evidence="1">Multi-pass membrane protein</topology>
    </subcellularLocation>
</comment>
<comment type="similarity">
    <text evidence="1">Belongs to the UPF0756 family.</text>
</comment>
<accession>C1EUT9</accession>
<gene>
    <name type="ordered locus">BCA_4705</name>
</gene>
<reference key="1">
    <citation type="submission" date="2009-02" db="EMBL/GenBank/DDBJ databases">
        <title>Genome sequence of Bacillus cereus 03BB102.</title>
        <authorList>
            <person name="Dodson R.J."/>
            <person name="Jackson P."/>
            <person name="Munk A.C."/>
            <person name="Brettin T."/>
            <person name="Bruce D."/>
            <person name="Detter C."/>
            <person name="Tapia R."/>
            <person name="Han C."/>
            <person name="Sutton G."/>
            <person name="Sims D."/>
        </authorList>
    </citation>
    <scope>NUCLEOTIDE SEQUENCE [LARGE SCALE GENOMIC DNA]</scope>
    <source>
        <strain>03BB102</strain>
    </source>
</reference>
<dbReference type="EMBL" id="CP001407">
    <property type="protein sequence ID" value="ACO30366.1"/>
    <property type="molecule type" value="Genomic_DNA"/>
</dbReference>
<dbReference type="RefSeq" id="WP_000625507.1">
    <property type="nucleotide sequence ID" value="NZ_CP009318.1"/>
</dbReference>
<dbReference type="KEGG" id="bcx:BCA_4705"/>
<dbReference type="PATRIC" id="fig|572264.18.peg.4654"/>
<dbReference type="Proteomes" id="UP000002210">
    <property type="component" value="Chromosome"/>
</dbReference>
<dbReference type="GO" id="GO:0005886">
    <property type="term" value="C:plasma membrane"/>
    <property type="evidence" value="ECO:0007669"/>
    <property type="project" value="UniProtKB-SubCell"/>
</dbReference>
<dbReference type="HAMAP" id="MF_01874">
    <property type="entry name" value="UPF0756"/>
    <property type="match status" value="1"/>
</dbReference>
<dbReference type="InterPro" id="IPR007382">
    <property type="entry name" value="UPF0756_TM"/>
</dbReference>
<dbReference type="PANTHER" id="PTHR38452">
    <property type="entry name" value="UPF0756 MEMBRANE PROTEIN YEAL"/>
    <property type="match status" value="1"/>
</dbReference>
<dbReference type="PANTHER" id="PTHR38452:SF1">
    <property type="entry name" value="UPF0756 MEMBRANE PROTEIN YEAL"/>
    <property type="match status" value="1"/>
</dbReference>
<dbReference type="Pfam" id="PF04284">
    <property type="entry name" value="DUF441"/>
    <property type="match status" value="1"/>
</dbReference>
<sequence>MISQSTLFLFILLIIGLIAKNQSLTVAIGVLFLLKFTFLGDKVFPYLQTKGINLGVTVITIAVLVPIATGEIGFKQLGEAAKSYYAWIALASGVAVALLAKGGVQLLTTDPHITTALVFGTIIAVALFNGVAVGPLIGAGIAYAVMSIIQMFK</sequence>
<keyword id="KW-1003">Cell membrane</keyword>
<keyword id="KW-0472">Membrane</keyword>
<keyword id="KW-0812">Transmembrane</keyword>
<keyword id="KW-1133">Transmembrane helix</keyword>
<evidence type="ECO:0000255" key="1">
    <source>
        <dbReference type="HAMAP-Rule" id="MF_01874"/>
    </source>
</evidence>
<organism>
    <name type="scientific">Bacillus cereus (strain 03BB102)</name>
    <dbReference type="NCBI Taxonomy" id="572264"/>
    <lineage>
        <taxon>Bacteria</taxon>
        <taxon>Bacillati</taxon>
        <taxon>Bacillota</taxon>
        <taxon>Bacilli</taxon>
        <taxon>Bacillales</taxon>
        <taxon>Bacillaceae</taxon>
        <taxon>Bacillus</taxon>
        <taxon>Bacillus cereus group</taxon>
    </lineage>
</organism>